<gene>
    <name type="primary">sdhC</name>
    <name type="ordered locus">RBE_1168</name>
</gene>
<organism>
    <name type="scientific">Rickettsia bellii (strain RML369-C)</name>
    <dbReference type="NCBI Taxonomy" id="336407"/>
    <lineage>
        <taxon>Bacteria</taxon>
        <taxon>Pseudomonadati</taxon>
        <taxon>Pseudomonadota</taxon>
        <taxon>Alphaproteobacteria</taxon>
        <taxon>Rickettsiales</taxon>
        <taxon>Rickettsiaceae</taxon>
        <taxon>Rickettsieae</taxon>
        <taxon>Rickettsia</taxon>
        <taxon>belli group</taxon>
    </lineage>
</organism>
<feature type="chain" id="PRO_0000281050" description="Succinate dehydrogenase cytochrome b556 subunit">
    <location>
        <begin position="1"/>
        <end position="125"/>
    </location>
</feature>
<feature type="topological domain" description="Cytoplasmic" evidence="1">
    <location>
        <begin position="1"/>
        <end position="29"/>
    </location>
</feature>
<feature type="transmembrane region" description="Helical" evidence="1">
    <location>
        <begin position="30"/>
        <end position="55"/>
    </location>
</feature>
<feature type="topological domain" description="Periplasmic" evidence="1">
    <location>
        <begin position="56"/>
        <end position="68"/>
    </location>
</feature>
<feature type="transmembrane region" description="Helical" evidence="1">
    <location>
        <begin position="69"/>
        <end position="89"/>
    </location>
</feature>
<feature type="topological domain" description="Cytoplasmic" evidence="1">
    <location>
        <begin position="90"/>
        <end position="104"/>
    </location>
</feature>
<feature type="transmembrane region" description="Helical" evidence="1">
    <location>
        <begin position="105"/>
        <end position="125"/>
    </location>
</feature>
<feature type="binding site" description="axial binding residue" evidence="1">
    <location>
        <position position="84"/>
    </location>
    <ligand>
        <name>heme</name>
        <dbReference type="ChEBI" id="CHEBI:30413"/>
        <note>ligand shared with second transmembrane subunit</note>
    </ligand>
    <ligandPart>
        <name>Fe</name>
        <dbReference type="ChEBI" id="CHEBI:18248"/>
    </ligandPart>
</feature>
<proteinExistence type="inferred from homology"/>
<protein>
    <recommendedName>
        <fullName>Succinate dehydrogenase cytochrome b556 subunit</fullName>
        <shortName>Cytochrome b-556</shortName>
    </recommendedName>
</protein>
<name>DHSC_RICBR</name>
<reference key="1">
    <citation type="journal article" date="2006" name="PLoS Genet.">
        <title>Genome sequence of Rickettsia bellii illuminates the role of amoebae in gene exchanges between intracellular pathogens.</title>
        <authorList>
            <person name="Ogata H."/>
            <person name="La Scola B."/>
            <person name="Audic S."/>
            <person name="Renesto P."/>
            <person name="Blanc G."/>
            <person name="Robert C."/>
            <person name="Fournier P.-E."/>
            <person name="Claverie J.-M."/>
            <person name="Raoult D."/>
        </authorList>
    </citation>
    <scope>NUCLEOTIDE SEQUENCE [LARGE SCALE GENOMIC DNA]</scope>
    <source>
        <strain>RML369-C</strain>
    </source>
</reference>
<comment type="function">
    <text evidence="1">Membrane-anchoring subunit of succinate dehydrogenase (SDH).</text>
</comment>
<comment type="cofactor">
    <cofactor evidence="1">
        <name>heme</name>
        <dbReference type="ChEBI" id="CHEBI:30413"/>
    </cofactor>
    <text evidence="1">The heme is bound between the two transmembrane subunits.</text>
</comment>
<comment type="pathway">
    <text>Carbohydrate metabolism; tricarboxylic acid cycle.</text>
</comment>
<comment type="subunit">
    <text evidence="1">Part of an enzyme complex containing four subunits: a flavoprotein, an iron-sulfur protein, plus two membrane-anchoring proteins, SdhC and SdhD. The complex can form homotrimers (By similarity).</text>
</comment>
<comment type="subcellular location">
    <subcellularLocation>
        <location>Cell inner membrane</location>
        <topology>Multi-pass membrane protein</topology>
    </subcellularLocation>
</comment>
<comment type="similarity">
    <text evidence="2">Belongs to the cytochrome b560 family.</text>
</comment>
<accession>Q1RHB5</accession>
<sequence>MTKTKQEIYNKRPTSPHLTIYKPQISSTLSILHRMTGVALFFAVSILAWWFILSKFDSNYIKLANCCCIIKICLILTSFAWFYHLCNGIRHLFWDIGLGFSIKAVNLTGWSVVICSVLFTILLWV</sequence>
<keyword id="KW-0997">Cell inner membrane</keyword>
<keyword id="KW-1003">Cell membrane</keyword>
<keyword id="KW-0249">Electron transport</keyword>
<keyword id="KW-0349">Heme</keyword>
<keyword id="KW-0408">Iron</keyword>
<keyword id="KW-0472">Membrane</keyword>
<keyword id="KW-0479">Metal-binding</keyword>
<keyword id="KW-0812">Transmembrane</keyword>
<keyword id="KW-1133">Transmembrane helix</keyword>
<keyword id="KW-0813">Transport</keyword>
<keyword id="KW-0816">Tricarboxylic acid cycle</keyword>
<dbReference type="EMBL" id="CP000087">
    <property type="protein sequence ID" value="ABE05249.1"/>
    <property type="molecule type" value="Genomic_DNA"/>
</dbReference>
<dbReference type="RefSeq" id="WP_011477827.1">
    <property type="nucleotide sequence ID" value="NC_007940.1"/>
</dbReference>
<dbReference type="SMR" id="Q1RHB5"/>
<dbReference type="KEGG" id="rbe:RBE_1168"/>
<dbReference type="eggNOG" id="COG2009">
    <property type="taxonomic scope" value="Bacteria"/>
</dbReference>
<dbReference type="HOGENOM" id="CLU_094691_3_1_5"/>
<dbReference type="OrthoDB" id="9799441at2"/>
<dbReference type="UniPathway" id="UPA00223"/>
<dbReference type="Proteomes" id="UP000001951">
    <property type="component" value="Chromosome"/>
</dbReference>
<dbReference type="GO" id="GO:0005886">
    <property type="term" value="C:plasma membrane"/>
    <property type="evidence" value="ECO:0007669"/>
    <property type="project" value="UniProtKB-SubCell"/>
</dbReference>
<dbReference type="GO" id="GO:0009055">
    <property type="term" value="F:electron transfer activity"/>
    <property type="evidence" value="ECO:0007669"/>
    <property type="project" value="InterPro"/>
</dbReference>
<dbReference type="GO" id="GO:0046872">
    <property type="term" value="F:metal ion binding"/>
    <property type="evidence" value="ECO:0007669"/>
    <property type="project" value="UniProtKB-KW"/>
</dbReference>
<dbReference type="GO" id="GO:0006099">
    <property type="term" value="P:tricarboxylic acid cycle"/>
    <property type="evidence" value="ECO:0007669"/>
    <property type="project" value="UniProtKB-UniPathway"/>
</dbReference>
<dbReference type="CDD" id="cd03499">
    <property type="entry name" value="SQR_TypeC_SdhC"/>
    <property type="match status" value="1"/>
</dbReference>
<dbReference type="Gene3D" id="1.20.1300.10">
    <property type="entry name" value="Fumarate reductase/succinate dehydrogenase, transmembrane subunit"/>
    <property type="match status" value="1"/>
</dbReference>
<dbReference type="InterPro" id="IPR034804">
    <property type="entry name" value="SQR/QFR_C/D"/>
</dbReference>
<dbReference type="InterPro" id="IPR018495">
    <property type="entry name" value="Succ_DH_cyt_bsu_CS"/>
</dbReference>
<dbReference type="InterPro" id="IPR014314">
    <property type="entry name" value="Succ_DH_cytb556"/>
</dbReference>
<dbReference type="InterPro" id="IPR000701">
    <property type="entry name" value="SuccDH_FuR_B_TM-su"/>
</dbReference>
<dbReference type="NCBIfam" id="TIGR02970">
    <property type="entry name" value="succ_dehyd_cytB"/>
    <property type="match status" value="1"/>
</dbReference>
<dbReference type="PANTHER" id="PTHR10978">
    <property type="entry name" value="SUCCINATE DEHYDROGENASE CYTOCHROME B560 SUBUNIT"/>
    <property type="match status" value="1"/>
</dbReference>
<dbReference type="PANTHER" id="PTHR10978:SF5">
    <property type="entry name" value="SUCCINATE DEHYDROGENASE CYTOCHROME B560 SUBUNIT, MITOCHONDRIAL"/>
    <property type="match status" value="1"/>
</dbReference>
<dbReference type="Pfam" id="PF01127">
    <property type="entry name" value="Sdh_cyt"/>
    <property type="match status" value="1"/>
</dbReference>
<dbReference type="PIRSF" id="PIRSF000178">
    <property type="entry name" value="SDH_cyt_b560"/>
    <property type="match status" value="1"/>
</dbReference>
<dbReference type="SUPFAM" id="SSF81343">
    <property type="entry name" value="Fumarate reductase respiratory complex transmembrane subunits"/>
    <property type="match status" value="1"/>
</dbReference>
<dbReference type="PROSITE" id="PS01000">
    <property type="entry name" value="SDH_CYT_1"/>
    <property type="match status" value="1"/>
</dbReference>
<dbReference type="PROSITE" id="PS01001">
    <property type="entry name" value="SDH_CYT_2"/>
    <property type="match status" value="1"/>
</dbReference>
<evidence type="ECO:0000250" key="1"/>
<evidence type="ECO:0000305" key="2"/>